<accession>Q8DGB4</accession>
<organism>
    <name type="scientific">Thermosynechococcus vestitus (strain NIES-2133 / IAM M-273 / BP-1)</name>
    <dbReference type="NCBI Taxonomy" id="197221"/>
    <lineage>
        <taxon>Bacteria</taxon>
        <taxon>Bacillati</taxon>
        <taxon>Cyanobacteriota</taxon>
        <taxon>Cyanophyceae</taxon>
        <taxon>Acaryochloridales</taxon>
        <taxon>Thermosynechococcaceae</taxon>
        <taxon>Thermosynechococcus</taxon>
    </lineage>
</organism>
<keyword id="KW-0002">3D-structure</keyword>
<keyword id="KW-0472">Membrane</keyword>
<keyword id="KW-0602">Photosynthesis</keyword>
<keyword id="KW-0603">Photosystem I</keyword>
<keyword id="KW-1185">Reference proteome</keyword>
<keyword id="KW-0793">Thylakoid</keyword>
<keyword id="KW-0812">Transmembrane</keyword>
<keyword id="KW-1133">Transmembrane helix</keyword>
<gene>
    <name evidence="1" type="primary">psaL</name>
    <name type="ordered locus">tlr2404</name>
</gene>
<name>PSAL_THEVB</name>
<reference key="1">
    <citation type="journal article" date="2002" name="DNA Res.">
        <title>Complete genome structure of the thermophilic cyanobacterium Thermosynechococcus elongatus BP-1.</title>
        <authorList>
            <person name="Nakamura Y."/>
            <person name="Kaneko T."/>
            <person name="Sato S."/>
            <person name="Ikeuchi M."/>
            <person name="Katoh H."/>
            <person name="Sasamoto S."/>
            <person name="Watanabe A."/>
            <person name="Iriguchi M."/>
            <person name="Kawashima K."/>
            <person name="Kimura T."/>
            <person name="Kishida Y."/>
            <person name="Kiyokawa C."/>
            <person name="Kohara M."/>
            <person name="Matsumoto M."/>
            <person name="Matsuno A."/>
            <person name="Nakazaki N."/>
            <person name="Shimpo S."/>
            <person name="Sugimoto M."/>
            <person name="Takeuchi C."/>
            <person name="Yamada M."/>
            <person name="Tabata S."/>
        </authorList>
    </citation>
    <scope>NUCLEOTIDE SEQUENCE [LARGE SCALE GENOMIC DNA]</scope>
    <source>
        <strain>NIES-2133 / IAM M-273 / BP-1</strain>
    </source>
</reference>
<reference key="2">
    <citation type="journal article" date="1996" name="Nat. Struct. Biol.">
        <title>Photosystem I at 4-A resolution represents the first structural model of a joint photosynthetic reaction centre and core antenna system.</title>
        <authorList>
            <person name="Krauss N."/>
            <person name="Schubert W.-D."/>
            <person name="Klukas O."/>
            <person name="Fromme P."/>
            <person name="Witt H.T."/>
            <person name="Saenger W."/>
        </authorList>
    </citation>
    <scope>X-RAY CRYSTALLOGRAPHY (4.0 ANGSTROMS)</scope>
</reference>
<reference key="3">
    <citation type="journal article" date="2001" name="Nature">
        <title>Three-dimensional structure of cyanobacterial photosystem I at 2.5 A resolution.</title>
        <authorList>
            <person name="Jordan P."/>
            <person name="Fromme P."/>
            <person name="Witt H.T."/>
            <person name="Klukas O."/>
            <person name="Saenger W."/>
            <person name="Krauss N."/>
        </authorList>
    </citation>
    <scope>X-RAY CRYSTALLOGRAPHY (2.5 ANGSTROMS) OF 1-143</scope>
</reference>
<feature type="chain" id="PRO_0000194698" description="Photosystem I reaction center subunit XI">
    <location>
        <begin position="1"/>
        <end position="155"/>
    </location>
</feature>
<feature type="transmembrane region" description="Helical" evidence="1">
    <location>
        <begin position="80"/>
        <end position="102"/>
    </location>
</feature>
<feature type="transmembrane region" description="Helical" evidence="1">
    <location>
        <begin position="117"/>
        <end position="139"/>
    </location>
</feature>
<feature type="strand" evidence="5">
    <location>
        <begin position="6"/>
        <end position="8"/>
    </location>
</feature>
<feature type="helix" evidence="3">
    <location>
        <begin position="9"/>
        <end position="11"/>
    </location>
</feature>
<feature type="strand" evidence="4">
    <location>
        <begin position="12"/>
        <end position="16"/>
    </location>
</feature>
<feature type="helix" evidence="3">
    <location>
        <begin position="21"/>
        <end position="24"/>
    </location>
</feature>
<feature type="helix" evidence="3">
    <location>
        <begin position="26"/>
        <end position="33"/>
    </location>
</feature>
<feature type="turn" evidence="3">
    <location>
        <begin position="36"/>
        <end position="38"/>
    </location>
</feature>
<feature type="helix" evidence="3">
    <location>
        <begin position="44"/>
        <end position="59"/>
    </location>
</feature>
<feature type="helix" evidence="3">
    <location>
        <begin position="61"/>
        <end position="66"/>
    </location>
</feature>
<feature type="turn" evidence="3">
    <location>
        <begin position="68"/>
        <end position="71"/>
    </location>
</feature>
<feature type="helix" evidence="3">
    <location>
        <begin position="75"/>
        <end position="101"/>
    </location>
</feature>
<feature type="strand" evidence="6">
    <location>
        <begin position="102"/>
        <end position="104"/>
    </location>
</feature>
<feature type="strand" evidence="6">
    <location>
        <begin position="108"/>
        <end position="110"/>
    </location>
</feature>
<feature type="helix" evidence="3">
    <location>
        <begin position="111"/>
        <end position="113"/>
    </location>
</feature>
<feature type="helix" evidence="3">
    <location>
        <begin position="115"/>
        <end position="141"/>
    </location>
</feature>
<feature type="helix" evidence="3">
    <location>
        <begin position="143"/>
        <end position="151"/>
    </location>
</feature>
<feature type="turn" evidence="3">
    <location>
        <begin position="152"/>
        <end position="154"/>
    </location>
</feature>
<proteinExistence type="evidence at protein level"/>
<sequence length="155" mass="16252">MAEELVKPYNGDPFVGHLSTPISDSGLVKTFIGNLPAYRQGLSPILRGLEVGMAHGYFLIGPWVKLGPLRDSDVANLGGLISGIALILVATACLAAYGLVSFQKGGSSSDPLKTSEGWSQFTAGFFVGAMGSAFVAFFLLENFSVVDGIMTGLFN</sequence>
<evidence type="ECO:0000255" key="1">
    <source>
        <dbReference type="HAMAP-Rule" id="MF_00447"/>
    </source>
</evidence>
<evidence type="ECO:0000305" key="2"/>
<evidence type="ECO:0007829" key="3">
    <source>
        <dbReference type="PDB" id="1JB0"/>
    </source>
</evidence>
<evidence type="ECO:0007829" key="4">
    <source>
        <dbReference type="PDB" id="6PFY"/>
    </source>
</evidence>
<evidence type="ECO:0007829" key="5">
    <source>
        <dbReference type="PDB" id="6TRA"/>
    </source>
</evidence>
<evidence type="ECO:0007829" key="6">
    <source>
        <dbReference type="PDB" id="7M75"/>
    </source>
</evidence>
<dbReference type="EMBL" id="BA000039">
    <property type="protein sequence ID" value="BAC09956.1"/>
    <property type="molecule type" value="Genomic_DNA"/>
</dbReference>
<dbReference type="RefSeq" id="NP_683194.1">
    <property type="nucleotide sequence ID" value="NC_004113.1"/>
</dbReference>
<dbReference type="RefSeq" id="WP_011058236.1">
    <property type="nucleotide sequence ID" value="NC_004113.1"/>
</dbReference>
<dbReference type="PDB" id="1JB0">
    <property type="method" value="X-ray"/>
    <property type="resolution" value="2.50 A"/>
    <property type="chains" value="L=2-155"/>
</dbReference>
<dbReference type="PDB" id="3PCQ">
    <property type="method" value="X-ray"/>
    <property type="resolution" value="8.98 A"/>
    <property type="chains" value="L=2-155"/>
</dbReference>
<dbReference type="PDB" id="4FE1">
    <property type="method" value="X-ray"/>
    <property type="resolution" value="4.92 A"/>
    <property type="chains" value="L=2-155"/>
</dbReference>
<dbReference type="PDB" id="5ZF0">
    <property type="method" value="X-ray"/>
    <property type="resolution" value="4.20 A"/>
    <property type="chains" value="L1/L2/L3/L4/L5/L6=2-155"/>
</dbReference>
<dbReference type="PDB" id="6LU1">
    <property type="method" value="EM"/>
    <property type="resolution" value="3.20 A"/>
    <property type="chains" value="L=1-155"/>
</dbReference>
<dbReference type="PDB" id="6PFY">
    <property type="method" value="X-ray"/>
    <property type="resolution" value="2.90 A"/>
    <property type="chains" value="L/U/h=1-155"/>
</dbReference>
<dbReference type="PDB" id="6PGK">
    <property type="method" value="X-ray"/>
    <property type="resolution" value="2.90 A"/>
    <property type="chains" value="L/U/h=1-155"/>
</dbReference>
<dbReference type="PDB" id="6TRA">
    <property type="method" value="EM"/>
    <property type="resolution" value="2.85 A"/>
    <property type="chains" value="L=1-155"/>
</dbReference>
<dbReference type="PDB" id="6TRC">
    <property type="method" value="EM"/>
    <property type="resolution" value="2.98 A"/>
    <property type="chains" value="0/L/l=1-155"/>
</dbReference>
<dbReference type="PDB" id="6TRD">
    <property type="method" value="EM"/>
    <property type="resolution" value="3.16 A"/>
    <property type="chains" value="0/L/l=1-155"/>
</dbReference>
<dbReference type="PDB" id="7BW2">
    <property type="method" value="X-ray"/>
    <property type="resolution" value="6.50 A"/>
    <property type="chains" value="L=1-155"/>
</dbReference>
<dbReference type="PDB" id="7FIX">
    <property type="method" value="EM"/>
    <property type="resolution" value="1.97 A"/>
    <property type="chains" value="L1/L2/L3=1-155"/>
</dbReference>
<dbReference type="PDB" id="7M75">
    <property type="method" value="X-ray"/>
    <property type="resolution" value="2.75 A"/>
    <property type="chains" value="L=2-155"/>
</dbReference>
<dbReference type="PDB" id="7M76">
    <property type="method" value="X-ray"/>
    <property type="resolution" value="3.00 A"/>
    <property type="chains" value="L=2-155"/>
</dbReference>
<dbReference type="PDB" id="7M78">
    <property type="method" value="X-ray"/>
    <property type="resolution" value="3.00 A"/>
    <property type="chains" value="L=2-155"/>
</dbReference>
<dbReference type="PDBsum" id="1JB0"/>
<dbReference type="PDBsum" id="3PCQ"/>
<dbReference type="PDBsum" id="4FE1"/>
<dbReference type="PDBsum" id="5ZF0"/>
<dbReference type="PDBsum" id="6LU1"/>
<dbReference type="PDBsum" id="6PFY"/>
<dbReference type="PDBsum" id="6PGK"/>
<dbReference type="PDBsum" id="6TRA"/>
<dbReference type="PDBsum" id="6TRC"/>
<dbReference type="PDBsum" id="6TRD"/>
<dbReference type="PDBsum" id="7BW2"/>
<dbReference type="PDBsum" id="7FIX"/>
<dbReference type="PDBsum" id="7M75"/>
<dbReference type="PDBsum" id="7M76"/>
<dbReference type="PDBsum" id="7M78"/>
<dbReference type="EMDB" id="EMD-0977"/>
<dbReference type="EMDB" id="EMD-10557"/>
<dbReference type="EMDB" id="EMD-10558"/>
<dbReference type="EMDB" id="EMD-10559"/>
<dbReference type="EMDB" id="EMD-31605"/>
<dbReference type="SMR" id="Q8DGB4"/>
<dbReference type="IntAct" id="Q8DGB4">
    <property type="interactions" value="1"/>
</dbReference>
<dbReference type="STRING" id="197221.gene:10749024"/>
<dbReference type="EnsemblBacteria" id="BAC09956">
    <property type="protein sequence ID" value="BAC09956"/>
    <property type="gene ID" value="BAC09956"/>
</dbReference>
<dbReference type="KEGG" id="tel:tlr2404"/>
<dbReference type="PATRIC" id="fig|197221.4.peg.2527"/>
<dbReference type="eggNOG" id="ENOG502ZMJ2">
    <property type="taxonomic scope" value="Bacteria"/>
</dbReference>
<dbReference type="EvolutionaryTrace" id="Q8DGB4"/>
<dbReference type="Proteomes" id="UP000000440">
    <property type="component" value="Chromosome"/>
</dbReference>
<dbReference type="GO" id="GO:0009538">
    <property type="term" value="C:photosystem I reaction center"/>
    <property type="evidence" value="ECO:0007669"/>
    <property type="project" value="InterPro"/>
</dbReference>
<dbReference type="GO" id="GO:0031676">
    <property type="term" value="C:plasma membrane-derived thylakoid membrane"/>
    <property type="evidence" value="ECO:0007669"/>
    <property type="project" value="UniProtKB-SubCell"/>
</dbReference>
<dbReference type="GO" id="GO:0015979">
    <property type="term" value="P:photosynthesis"/>
    <property type="evidence" value="ECO:0007669"/>
    <property type="project" value="UniProtKB-UniRule"/>
</dbReference>
<dbReference type="Gene3D" id="1.20.1240.10">
    <property type="entry name" value="Photosystem I PsaL, reaction centre subunit XI"/>
    <property type="match status" value="1"/>
</dbReference>
<dbReference type="HAMAP" id="MF_00447">
    <property type="entry name" value="PSI_PsaL"/>
    <property type="match status" value="1"/>
</dbReference>
<dbReference type="InterPro" id="IPR003757">
    <property type="entry name" value="PSI_PsaL"/>
</dbReference>
<dbReference type="InterPro" id="IPR036592">
    <property type="entry name" value="PSI_PsaL_sf"/>
</dbReference>
<dbReference type="InterPro" id="IPR022980">
    <property type="entry name" value="PSI_suXI"/>
</dbReference>
<dbReference type="NCBIfam" id="NF001926">
    <property type="entry name" value="PRK00704.1-3"/>
    <property type="match status" value="1"/>
</dbReference>
<dbReference type="PANTHER" id="PTHR34803">
    <property type="entry name" value="PHOTOSYSTEM I REACTION CENTER SUBUNIT XI, CHLOROPLASTIC"/>
    <property type="match status" value="1"/>
</dbReference>
<dbReference type="PANTHER" id="PTHR34803:SF2">
    <property type="entry name" value="PHOTOSYSTEM I REACTION CENTER SUBUNIT XI, CHLOROPLASTIC"/>
    <property type="match status" value="1"/>
</dbReference>
<dbReference type="Pfam" id="PF02605">
    <property type="entry name" value="PsaL"/>
    <property type="match status" value="1"/>
</dbReference>
<dbReference type="SUPFAM" id="SSF81568">
    <property type="entry name" value="Photosystem I reaction center subunit XI, PsaL"/>
    <property type="match status" value="1"/>
</dbReference>
<comment type="subcellular location">
    <subcellularLocation>
        <location evidence="2">Cellular thylakoid membrane</location>
        <topology evidence="2">Multi-pass membrane protein</topology>
    </subcellularLocation>
</comment>
<comment type="similarity">
    <text evidence="1">Belongs to the PsaL family.</text>
</comment>
<protein>
    <recommendedName>
        <fullName evidence="1">Photosystem I reaction center subunit XI</fullName>
    </recommendedName>
    <alternativeName>
        <fullName evidence="1">PSI subunit V</fullName>
    </alternativeName>
    <alternativeName>
        <fullName evidence="1">PSI-L</fullName>
    </alternativeName>
</protein>